<evidence type="ECO:0000255" key="1">
    <source>
        <dbReference type="PROSITE-ProRule" id="PRU00981"/>
    </source>
</evidence>
<evidence type="ECO:0000256" key="2">
    <source>
        <dbReference type="SAM" id="MobiDB-lite"/>
    </source>
</evidence>
<evidence type="ECO:0000269" key="3">
    <source>
    </source>
</evidence>
<evidence type="ECO:0000269" key="4">
    <source>
    </source>
</evidence>
<evidence type="ECO:0000303" key="5">
    <source>
    </source>
</evidence>
<evidence type="ECO:0000305" key="6"/>
<evidence type="ECO:0000312" key="7">
    <source>
        <dbReference type="Proteomes" id="UP000001940"/>
    </source>
</evidence>
<evidence type="ECO:0000312" key="8">
    <source>
        <dbReference type="WormBase" id="C18A3.8"/>
    </source>
</evidence>
<protein>
    <recommendedName>
        <fullName evidence="5">Helix-loop-helix protein 14</fullName>
    </recommendedName>
</protein>
<reference evidence="7" key="1">
    <citation type="journal article" date="1998" name="Science">
        <title>Genome sequence of the nematode C. elegans: a platform for investigating biology.</title>
        <authorList>
            <consortium name="The C. elegans sequencing consortium"/>
        </authorList>
    </citation>
    <scope>NUCLEOTIDE SEQUENCE [LARGE SCALE GENOMIC DNA]</scope>
    <source>
        <strain evidence="7">Bristol N2</strain>
    </source>
</reference>
<reference evidence="6" key="2">
    <citation type="journal article" date="2003" name="Development">
        <title>HLH-14 is a C. elegans achaete-scute protein that promotes neurogenesis through asymmetric cell division.</title>
        <authorList>
            <person name="Frank C.A."/>
            <person name="Baum P.D."/>
            <person name="Garriga G."/>
        </authorList>
    </citation>
    <scope>FUNCTION</scope>
    <scope>SUBCELLULAR LOCATION</scope>
    <scope>DEVELOPMENTAL STAGE</scope>
    <scope>MUTAGENESIS OF LEU-27 AND 54-GLN--HIS-148</scope>
</reference>
<reference evidence="6" key="3">
    <citation type="journal article" date="2011" name="PLoS Genet.">
        <title>A Genome-Wide RNAi Screen for Factors Involved in Neuronal Specification in Caenorhabditis elegans.</title>
        <authorList>
            <person name="Poole R.J."/>
            <person name="Bashllari E."/>
            <person name="Cochella L."/>
            <person name="Flowers E.B."/>
            <person name="Hobert O."/>
        </authorList>
    </citation>
    <scope>FUNCTION</scope>
    <scope>DEVELOPMENTAL STAGE</scope>
    <scope>DISRUPTION PHENOTYPE</scope>
</reference>
<gene>
    <name evidence="8" type="primary">hlh-14</name>
    <name evidence="8" type="ORF">C18A3.8</name>
</gene>
<comment type="function">
    <text evidence="3 4">Probable transcription factor, involved in determining neuroblast cell fate, morphogenesis and aspects of terminal differentiation in both left/right symmetric and asymmetric neuronal lineages.</text>
</comment>
<comment type="subcellular location">
    <subcellularLocation>
        <location evidence="1 3">Nucleus</location>
    </subcellularLocation>
</comment>
<comment type="developmental stage">
    <text evidence="3 4">Expressed in both symmetric and asymmetric neuronal lineages (PubMed:21698137). In the posterior embryo, expressed in PVQ/HSN/PHB neuroblasts and their descendants (PubMed:14627726, PubMed:21698137). Expressed in the sensory ASE neuron lineage (PubMed:21698137).</text>
</comment>
<comment type="disruption phenotype">
    <text evidence="4">RNAi-mediated knockdown disrupts differentiation of ASE L/R sensory neurons.</text>
</comment>
<organism evidence="7">
    <name type="scientific">Caenorhabditis elegans</name>
    <dbReference type="NCBI Taxonomy" id="6239"/>
    <lineage>
        <taxon>Eukaryota</taxon>
        <taxon>Metazoa</taxon>
        <taxon>Ecdysozoa</taxon>
        <taxon>Nematoda</taxon>
        <taxon>Chromadorea</taxon>
        <taxon>Rhabditida</taxon>
        <taxon>Rhabditina</taxon>
        <taxon>Rhabditomorpha</taxon>
        <taxon>Rhabditoidea</taxon>
        <taxon>Rhabditidae</taxon>
        <taxon>Peloderinae</taxon>
        <taxon>Caenorhabditis</taxon>
    </lineage>
</organism>
<keyword id="KW-0217">Developmental protein</keyword>
<keyword id="KW-0238">DNA-binding</keyword>
<keyword id="KW-0524">Neurogenesis</keyword>
<keyword id="KW-0539">Nucleus</keyword>
<keyword id="KW-1185">Reference proteome</keyword>
<keyword id="KW-0804">Transcription</keyword>
<keyword id="KW-0805">Transcription regulation</keyword>
<accession>Q09961</accession>
<sequence length="148" mass="17148">MAKKNQVARNERERKRVHQVNHGFDVLRNRLQPKNHTKKWSKADTLREAVKYIQQLQVLLNQDPQQPSVSSSTPDYTMNNSNNFNNYAVKEEFSMYLPQNYCPQNQMSVPHGDVSHNFNSPTSSVSSSSYSPTQMCYPPVSYSNYPHH</sequence>
<proteinExistence type="evidence at protein level"/>
<feature type="chain" id="PRO_0000452179" description="Helix-loop-helix protein 14" evidence="6">
    <location>
        <begin position="1"/>
        <end position="148"/>
    </location>
</feature>
<feature type="domain" description="bHLH" evidence="1">
    <location>
        <begin position="4"/>
        <end position="56"/>
    </location>
</feature>
<feature type="region of interest" description="Disordered" evidence="2">
    <location>
        <begin position="1"/>
        <end position="21"/>
    </location>
</feature>
<feature type="region of interest" description="Basic motif" evidence="1">
    <location>
        <begin position="4"/>
        <end position="17"/>
    </location>
</feature>
<feature type="region of interest" description="Helix-loop-helix motif" evidence="1">
    <location>
        <begin position="18"/>
        <end position="56"/>
    </location>
</feature>
<feature type="region of interest" description="Disordered" evidence="2">
    <location>
        <begin position="63"/>
        <end position="83"/>
    </location>
</feature>
<feature type="region of interest" description="Disordered" evidence="2">
    <location>
        <begin position="112"/>
        <end position="132"/>
    </location>
</feature>
<feature type="compositionally biased region" description="Polar residues" evidence="2">
    <location>
        <begin position="63"/>
        <end position="78"/>
    </location>
</feature>
<feature type="compositionally biased region" description="Low complexity" evidence="2">
    <location>
        <begin position="120"/>
        <end position="132"/>
    </location>
</feature>
<feature type="mutagenesis site" description="In gm34; absent HSN motoneurons, PHB sensory neurons and PVQ neurons." evidence="3">
    <original>L</original>
    <variation>F</variation>
    <location>
        <position position="27"/>
    </location>
</feature>
<feature type="mutagenesis site" description="In ju243; absent PHB sensory neurons." evidence="3">
    <location>
        <begin position="54"/>
        <end position="148"/>
    </location>
</feature>
<dbReference type="EMBL" id="BX284602">
    <property type="protein sequence ID" value="CCD65023.2"/>
    <property type="molecule type" value="Genomic_DNA"/>
</dbReference>
<dbReference type="PIR" id="T15548">
    <property type="entry name" value="T15548"/>
</dbReference>
<dbReference type="RefSeq" id="NP_495131.3">
    <property type="nucleotide sequence ID" value="NM_062730.6"/>
</dbReference>
<dbReference type="SMR" id="Q09961"/>
<dbReference type="FunCoup" id="Q09961">
    <property type="interactions" value="141"/>
</dbReference>
<dbReference type="IntAct" id="Q09961">
    <property type="interactions" value="1"/>
</dbReference>
<dbReference type="STRING" id="6239.C18A3.8.1"/>
<dbReference type="PaxDb" id="6239-C18A3.8"/>
<dbReference type="EnsemblMetazoa" id="C18A3.8.1">
    <property type="protein sequence ID" value="C18A3.8.1"/>
    <property type="gene ID" value="WBGene00001958"/>
</dbReference>
<dbReference type="GeneID" id="182758"/>
<dbReference type="KEGG" id="cel:CELE_C18A3.8"/>
<dbReference type="UCSC" id="C18A3.8">
    <property type="organism name" value="c. elegans"/>
</dbReference>
<dbReference type="AGR" id="WB:WBGene00001958"/>
<dbReference type="CTD" id="182758"/>
<dbReference type="WormBase" id="C18A3.8">
    <property type="protein sequence ID" value="CE50415"/>
    <property type="gene ID" value="WBGene00001958"/>
    <property type="gene designation" value="hlh-14"/>
</dbReference>
<dbReference type="eggNOG" id="KOG4029">
    <property type="taxonomic scope" value="Eukaryota"/>
</dbReference>
<dbReference type="GeneTree" id="ENSGT00940000170891"/>
<dbReference type="HOGENOM" id="CLU_1129946_0_0_1"/>
<dbReference type="InParanoid" id="Q09961"/>
<dbReference type="OMA" id="YSPTQMC"/>
<dbReference type="OrthoDB" id="10048995at2759"/>
<dbReference type="PRO" id="PR:Q09961"/>
<dbReference type="Proteomes" id="UP000001940">
    <property type="component" value="Chromosome II"/>
</dbReference>
<dbReference type="Bgee" id="WBGene00001958">
    <property type="expression patterns" value="Expressed in embryo and 3 other cell types or tissues"/>
</dbReference>
<dbReference type="GO" id="GO:0005634">
    <property type="term" value="C:nucleus"/>
    <property type="evidence" value="ECO:0000314"/>
    <property type="project" value="WormBase"/>
</dbReference>
<dbReference type="GO" id="GO:0090575">
    <property type="term" value="C:RNA polymerase II transcription regulator complex"/>
    <property type="evidence" value="ECO:0000318"/>
    <property type="project" value="GO_Central"/>
</dbReference>
<dbReference type="GO" id="GO:0000981">
    <property type="term" value="F:DNA-binding transcription factor activity, RNA polymerase II-specific"/>
    <property type="evidence" value="ECO:0000318"/>
    <property type="project" value="GO_Central"/>
</dbReference>
<dbReference type="GO" id="GO:0046983">
    <property type="term" value="F:protein dimerization activity"/>
    <property type="evidence" value="ECO:0007669"/>
    <property type="project" value="InterPro"/>
</dbReference>
<dbReference type="GO" id="GO:0000977">
    <property type="term" value="F:RNA polymerase II transcription regulatory region sequence-specific DNA binding"/>
    <property type="evidence" value="ECO:0000318"/>
    <property type="project" value="GO_Central"/>
</dbReference>
<dbReference type="GO" id="GO:0043565">
    <property type="term" value="F:sequence-specific DNA binding"/>
    <property type="evidence" value="ECO:0000250"/>
    <property type="project" value="WormBase"/>
</dbReference>
<dbReference type="GO" id="GO:0010171">
    <property type="term" value="P:body morphogenesis"/>
    <property type="evidence" value="ECO:0000315"/>
    <property type="project" value="WormBase"/>
</dbReference>
<dbReference type="GO" id="GO:0018991">
    <property type="term" value="P:egg-laying behavior"/>
    <property type="evidence" value="ECO:0000315"/>
    <property type="project" value="WormBase"/>
</dbReference>
<dbReference type="GO" id="GO:0040011">
    <property type="term" value="P:locomotion"/>
    <property type="evidence" value="ECO:0000315"/>
    <property type="project" value="WormBase"/>
</dbReference>
<dbReference type="GO" id="GO:0002119">
    <property type="term" value="P:nematode larval development"/>
    <property type="evidence" value="ECO:0000315"/>
    <property type="project" value="WormBase"/>
</dbReference>
<dbReference type="GO" id="GO:0014018">
    <property type="term" value="P:neuroblast fate specification"/>
    <property type="evidence" value="ECO:0000315"/>
    <property type="project" value="WormBase"/>
</dbReference>
<dbReference type="GO" id="GO:0030182">
    <property type="term" value="P:neuron differentiation"/>
    <property type="evidence" value="ECO:0000318"/>
    <property type="project" value="GO_Central"/>
</dbReference>
<dbReference type="GO" id="GO:0001764">
    <property type="term" value="P:neuron migration"/>
    <property type="evidence" value="ECO:0000315"/>
    <property type="project" value="WormBase"/>
</dbReference>
<dbReference type="GO" id="GO:0040010">
    <property type="term" value="P:positive regulation of growth rate"/>
    <property type="evidence" value="ECO:0000315"/>
    <property type="project" value="WormBase"/>
</dbReference>
<dbReference type="GO" id="GO:0045944">
    <property type="term" value="P:positive regulation of transcription by RNA polymerase II"/>
    <property type="evidence" value="ECO:0000318"/>
    <property type="project" value="GO_Central"/>
</dbReference>
<dbReference type="GO" id="GO:0009786">
    <property type="term" value="P:regulation of asymmetric cell division"/>
    <property type="evidence" value="ECO:0000315"/>
    <property type="project" value="WormBase"/>
</dbReference>
<dbReference type="GO" id="GO:0050767">
    <property type="term" value="P:regulation of neurogenesis"/>
    <property type="evidence" value="ECO:0000318"/>
    <property type="project" value="GO_Central"/>
</dbReference>
<dbReference type="GO" id="GO:0045664">
    <property type="term" value="P:regulation of neuron differentiation"/>
    <property type="evidence" value="ECO:0000316"/>
    <property type="project" value="WormBase"/>
</dbReference>
<dbReference type="GO" id="GO:0006357">
    <property type="term" value="P:regulation of transcription by RNA polymerase II"/>
    <property type="evidence" value="ECO:0000250"/>
    <property type="project" value="WormBase"/>
</dbReference>
<dbReference type="GO" id="GO:0022414">
    <property type="term" value="P:reproductive process"/>
    <property type="evidence" value="ECO:0000315"/>
    <property type="project" value="WormBase"/>
</dbReference>
<dbReference type="GO" id="GO:0007423">
    <property type="term" value="P:sensory organ development"/>
    <property type="evidence" value="ECO:0000318"/>
    <property type="project" value="GO_Central"/>
</dbReference>
<dbReference type="FunFam" id="4.10.280.10:FF:000029">
    <property type="entry name" value="Achaete-scute family bHLH transcription factor 1"/>
    <property type="match status" value="1"/>
</dbReference>
<dbReference type="Gene3D" id="4.10.280.10">
    <property type="entry name" value="Helix-loop-helix DNA-binding domain"/>
    <property type="match status" value="1"/>
</dbReference>
<dbReference type="InterPro" id="IPR011598">
    <property type="entry name" value="bHLH_dom"/>
</dbReference>
<dbReference type="InterPro" id="IPR036638">
    <property type="entry name" value="HLH_DNA-bd_sf"/>
</dbReference>
<dbReference type="InterPro" id="IPR015660">
    <property type="entry name" value="MASH1/Ascl1a-like"/>
</dbReference>
<dbReference type="PANTHER" id="PTHR13935:SF153">
    <property type="entry name" value="ACHAETE-SCUTE FAMILY BHLH TRANSCRIPTION FACTOR 1"/>
    <property type="match status" value="1"/>
</dbReference>
<dbReference type="PANTHER" id="PTHR13935">
    <property type="entry name" value="ACHAETE-SCUTE TRANSCRIPTION FACTOR-RELATED"/>
    <property type="match status" value="1"/>
</dbReference>
<dbReference type="Pfam" id="PF00010">
    <property type="entry name" value="HLH"/>
    <property type="match status" value="1"/>
</dbReference>
<dbReference type="SMART" id="SM00353">
    <property type="entry name" value="HLH"/>
    <property type="match status" value="1"/>
</dbReference>
<dbReference type="SUPFAM" id="SSF47459">
    <property type="entry name" value="HLH, helix-loop-helix DNA-binding domain"/>
    <property type="match status" value="1"/>
</dbReference>
<dbReference type="PROSITE" id="PS50888">
    <property type="entry name" value="BHLH"/>
    <property type="match status" value="1"/>
</dbReference>
<name>HLH14_CAEEL</name>